<sequence>MLPIRDCVQQTPGYVPGEQPQTTDYIKLNTNENPYAPPDEIFNNLEEELKKVRLYPDPVSTKLRKAAGEVFGFSYEQILAGNGSDDILNIALRTFVNPGETVAFLDLTYSLYETIAKVHGATIQTISTNENFELDSPLICPEAKLIFVASPNPPLGKHLNRQYLKETCEQATGVVLIDEAYVDFSDEDHWDFIKEYDNVIVSRTMSKSYSLAGMRVGFGISSREIIEQMNKVRDSYNLDRIAQTLGANCFQFQDYFQSIWQKVRTTRNRLIASLRNLDFFVFDSDANFVLASPQWIEASDLYTKLKERKVLVRYFKHPRISNYIRITVGTDAEIDRLLEVIKQLKNES</sequence>
<feature type="chain" id="PRO_1000149090" description="Histidinol-phosphate aminotransferase">
    <location>
        <begin position="1"/>
        <end position="348"/>
    </location>
</feature>
<feature type="modified residue" description="N6-(pyridoxal phosphate)lysine" evidence="1">
    <location>
        <position position="207"/>
    </location>
</feature>
<proteinExistence type="inferred from homology"/>
<accession>B1WY56</accession>
<dbReference type="EC" id="2.6.1.9" evidence="1"/>
<dbReference type="EMBL" id="CP000806">
    <property type="protein sequence ID" value="ACB52640.1"/>
    <property type="molecule type" value="Genomic_DNA"/>
</dbReference>
<dbReference type="RefSeq" id="WP_009547915.1">
    <property type="nucleotide sequence ID" value="NC_010546.1"/>
</dbReference>
<dbReference type="SMR" id="B1WY56"/>
<dbReference type="STRING" id="43989.cce_3292"/>
<dbReference type="KEGG" id="cyt:cce_3292"/>
<dbReference type="eggNOG" id="COG0079">
    <property type="taxonomic scope" value="Bacteria"/>
</dbReference>
<dbReference type="HOGENOM" id="CLU_017584_3_0_3"/>
<dbReference type="OrthoDB" id="9813612at2"/>
<dbReference type="UniPathway" id="UPA00031">
    <property type="reaction ID" value="UER00012"/>
</dbReference>
<dbReference type="Proteomes" id="UP000001203">
    <property type="component" value="Chromosome circular"/>
</dbReference>
<dbReference type="GO" id="GO:0004400">
    <property type="term" value="F:histidinol-phosphate transaminase activity"/>
    <property type="evidence" value="ECO:0007669"/>
    <property type="project" value="UniProtKB-UniRule"/>
</dbReference>
<dbReference type="GO" id="GO:0030170">
    <property type="term" value="F:pyridoxal phosphate binding"/>
    <property type="evidence" value="ECO:0007669"/>
    <property type="project" value="InterPro"/>
</dbReference>
<dbReference type="GO" id="GO:0000105">
    <property type="term" value="P:L-histidine biosynthetic process"/>
    <property type="evidence" value="ECO:0007669"/>
    <property type="project" value="UniProtKB-UniRule"/>
</dbReference>
<dbReference type="CDD" id="cd00609">
    <property type="entry name" value="AAT_like"/>
    <property type="match status" value="1"/>
</dbReference>
<dbReference type="Gene3D" id="3.90.1150.10">
    <property type="entry name" value="Aspartate Aminotransferase, domain 1"/>
    <property type="match status" value="1"/>
</dbReference>
<dbReference type="Gene3D" id="3.40.640.10">
    <property type="entry name" value="Type I PLP-dependent aspartate aminotransferase-like (Major domain)"/>
    <property type="match status" value="1"/>
</dbReference>
<dbReference type="HAMAP" id="MF_01023">
    <property type="entry name" value="HisC_aminotrans_2"/>
    <property type="match status" value="1"/>
</dbReference>
<dbReference type="InterPro" id="IPR001917">
    <property type="entry name" value="Aminotrans_II_pyridoxalP_BS"/>
</dbReference>
<dbReference type="InterPro" id="IPR004839">
    <property type="entry name" value="Aminotransferase_I/II_large"/>
</dbReference>
<dbReference type="InterPro" id="IPR005861">
    <property type="entry name" value="HisP_aminotrans"/>
</dbReference>
<dbReference type="InterPro" id="IPR015424">
    <property type="entry name" value="PyrdxlP-dep_Trfase"/>
</dbReference>
<dbReference type="InterPro" id="IPR015421">
    <property type="entry name" value="PyrdxlP-dep_Trfase_major"/>
</dbReference>
<dbReference type="InterPro" id="IPR015422">
    <property type="entry name" value="PyrdxlP-dep_Trfase_small"/>
</dbReference>
<dbReference type="NCBIfam" id="TIGR01141">
    <property type="entry name" value="hisC"/>
    <property type="match status" value="1"/>
</dbReference>
<dbReference type="PANTHER" id="PTHR42885:SF2">
    <property type="entry name" value="HISTIDINOL-PHOSPHATE AMINOTRANSFERASE"/>
    <property type="match status" value="1"/>
</dbReference>
<dbReference type="PANTHER" id="PTHR42885">
    <property type="entry name" value="HISTIDINOL-PHOSPHATE AMINOTRANSFERASE-RELATED"/>
    <property type="match status" value="1"/>
</dbReference>
<dbReference type="Pfam" id="PF00155">
    <property type="entry name" value="Aminotran_1_2"/>
    <property type="match status" value="1"/>
</dbReference>
<dbReference type="SUPFAM" id="SSF53383">
    <property type="entry name" value="PLP-dependent transferases"/>
    <property type="match status" value="1"/>
</dbReference>
<dbReference type="PROSITE" id="PS00599">
    <property type="entry name" value="AA_TRANSFER_CLASS_2"/>
    <property type="match status" value="1"/>
</dbReference>
<gene>
    <name evidence="1" type="primary">hisC</name>
    <name type="ordered locus">cce_3292</name>
</gene>
<keyword id="KW-0028">Amino-acid biosynthesis</keyword>
<keyword id="KW-0032">Aminotransferase</keyword>
<keyword id="KW-0368">Histidine biosynthesis</keyword>
<keyword id="KW-0663">Pyridoxal phosphate</keyword>
<keyword id="KW-1185">Reference proteome</keyword>
<keyword id="KW-0808">Transferase</keyword>
<protein>
    <recommendedName>
        <fullName evidence="1">Histidinol-phosphate aminotransferase</fullName>
        <ecNumber evidence="1">2.6.1.9</ecNumber>
    </recommendedName>
    <alternativeName>
        <fullName evidence="1">Imidazole acetol-phosphate transaminase</fullName>
    </alternativeName>
</protein>
<name>HIS8_CROS5</name>
<evidence type="ECO:0000255" key="1">
    <source>
        <dbReference type="HAMAP-Rule" id="MF_01023"/>
    </source>
</evidence>
<reference key="1">
    <citation type="journal article" date="2008" name="Proc. Natl. Acad. Sci. U.S.A.">
        <title>The genome of Cyanothece 51142, a unicellular diazotrophic cyanobacterium important in the marine nitrogen cycle.</title>
        <authorList>
            <person name="Welsh E.A."/>
            <person name="Liberton M."/>
            <person name="Stoeckel J."/>
            <person name="Loh T."/>
            <person name="Elvitigala T."/>
            <person name="Wang C."/>
            <person name="Wollam A."/>
            <person name="Fulton R.S."/>
            <person name="Clifton S.W."/>
            <person name="Jacobs J.M."/>
            <person name="Aurora R."/>
            <person name="Ghosh B.K."/>
            <person name="Sherman L.A."/>
            <person name="Smith R.D."/>
            <person name="Wilson R.K."/>
            <person name="Pakrasi H.B."/>
        </authorList>
    </citation>
    <scope>NUCLEOTIDE SEQUENCE [LARGE SCALE GENOMIC DNA]</scope>
    <source>
        <strain>ATCC 51142 / BH68</strain>
    </source>
</reference>
<comment type="catalytic activity">
    <reaction evidence="1">
        <text>L-histidinol phosphate + 2-oxoglutarate = 3-(imidazol-4-yl)-2-oxopropyl phosphate + L-glutamate</text>
        <dbReference type="Rhea" id="RHEA:23744"/>
        <dbReference type="ChEBI" id="CHEBI:16810"/>
        <dbReference type="ChEBI" id="CHEBI:29985"/>
        <dbReference type="ChEBI" id="CHEBI:57766"/>
        <dbReference type="ChEBI" id="CHEBI:57980"/>
        <dbReference type="EC" id="2.6.1.9"/>
    </reaction>
</comment>
<comment type="cofactor">
    <cofactor evidence="1">
        <name>pyridoxal 5'-phosphate</name>
        <dbReference type="ChEBI" id="CHEBI:597326"/>
    </cofactor>
</comment>
<comment type="pathway">
    <text evidence="1">Amino-acid biosynthesis; L-histidine biosynthesis; L-histidine from 5-phospho-alpha-D-ribose 1-diphosphate: step 7/9.</text>
</comment>
<comment type="subunit">
    <text evidence="1">Homodimer.</text>
</comment>
<comment type="similarity">
    <text evidence="1">Belongs to the class-II pyridoxal-phosphate-dependent aminotransferase family. Histidinol-phosphate aminotransferase subfamily.</text>
</comment>
<organism>
    <name type="scientific">Crocosphaera subtropica (strain ATCC 51142 / BH68)</name>
    <name type="common">Cyanothece sp. (strain ATCC 51142)</name>
    <dbReference type="NCBI Taxonomy" id="43989"/>
    <lineage>
        <taxon>Bacteria</taxon>
        <taxon>Bacillati</taxon>
        <taxon>Cyanobacteriota</taxon>
        <taxon>Cyanophyceae</taxon>
        <taxon>Oscillatoriophycideae</taxon>
        <taxon>Chroococcales</taxon>
        <taxon>Aphanothecaceae</taxon>
        <taxon>Crocosphaera</taxon>
        <taxon>Crocosphaera subtropica</taxon>
    </lineage>
</organism>